<protein>
    <recommendedName>
        <fullName evidence="1">Cysteine desulfuration protein SufE</fullName>
    </recommendedName>
</protein>
<evidence type="ECO:0000255" key="1">
    <source>
        <dbReference type="HAMAP-Rule" id="MF_01832"/>
    </source>
</evidence>
<proteinExistence type="inferred from homology"/>
<comment type="function">
    <text evidence="1">Participates in cysteine desulfuration mediated by SufS. Cysteine desulfuration mobilizes sulfur from L-cysteine to yield L-alanine and constitutes an essential step in sulfur metabolism for biosynthesis of a variety of sulfur-containing biomolecules. Functions as a sulfur acceptor for SufS, by mediating the direct transfer of the sulfur atom from the S-sulfanylcysteine of SufS, an intermediate product of cysteine desulfuration process.</text>
</comment>
<comment type="pathway">
    <text evidence="1">Cofactor biosynthesis; iron-sulfur cluster biosynthesis.</text>
</comment>
<comment type="subunit">
    <text evidence="1">Homodimer. Interacts with SufS.</text>
</comment>
<comment type="subcellular location">
    <subcellularLocation>
        <location evidence="1">Cytoplasm</location>
    </subcellularLocation>
</comment>
<comment type="similarity">
    <text evidence="1">Belongs to the SufE family.</text>
</comment>
<accession>Q6D624</accession>
<dbReference type="EMBL" id="BX950851">
    <property type="protein sequence ID" value="CAG74767.1"/>
    <property type="molecule type" value="Genomic_DNA"/>
</dbReference>
<dbReference type="RefSeq" id="WP_011093434.1">
    <property type="nucleotide sequence ID" value="NC_004547.2"/>
</dbReference>
<dbReference type="SMR" id="Q6D624"/>
<dbReference type="STRING" id="218491.ECA1864"/>
<dbReference type="GeneID" id="57209429"/>
<dbReference type="KEGG" id="eca:ECA1864"/>
<dbReference type="PATRIC" id="fig|218491.5.peg.1893"/>
<dbReference type="eggNOG" id="COG2166">
    <property type="taxonomic scope" value="Bacteria"/>
</dbReference>
<dbReference type="HOGENOM" id="CLU_124502_1_1_6"/>
<dbReference type="OrthoDB" id="9799320at2"/>
<dbReference type="UniPathway" id="UPA00266"/>
<dbReference type="Proteomes" id="UP000007966">
    <property type="component" value="Chromosome"/>
</dbReference>
<dbReference type="GO" id="GO:0005737">
    <property type="term" value="C:cytoplasm"/>
    <property type="evidence" value="ECO:0007669"/>
    <property type="project" value="UniProtKB-SubCell"/>
</dbReference>
<dbReference type="GO" id="GO:0016226">
    <property type="term" value="P:iron-sulfur cluster assembly"/>
    <property type="evidence" value="ECO:0007669"/>
    <property type="project" value="InterPro"/>
</dbReference>
<dbReference type="GO" id="GO:0006790">
    <property type="term" value="P:sulfur compound metabolic process"/>
    <property type="evidence" value="ECO:0007669"/>
    <property type="project" value="InterPro"/>
</dbReference>
<dbReference type="Gene3D" id="3.90.1010.10">
    <property type="match status" value="1"/>
</dbReference>
<dbReference type="HAMAP" id="MF_01832">
    <property type="entry name" value="SufE"/>
    <property type="match status" value="1"/>
</dbReference>
<dbReference type="InterPro" id="IPR023939">
    <property type="entry name" value="Cysteine_desulfuration_SufE"/>
</dbReference>
<dbReference type="InterPro" id="IPR003808">
    <property type="entry name" value="Fe-S_metab-assoc_dom"/>
</dbReference>
<dbReference type="NCBIfam" id="NF006792">
    <property type="entry name" value="PRK09296.1"/>
    <property type="match status" value="1"/>
</dbReference>
<dbReference type="PANTHER" id="PTHR43597:SF3">
    <property type="entry name" value="CYSTEINE DESULFURATION PROTEIN SUFE"/>
    <property type="match status" value="1"/>
</dbReference>
<dbReference type="PANTHER" id="PTHR43597">
    <property type="entry name" value="SULFUR ACCEPTOR PROTEIN CSDE"/>
    <property type="match status" value="1"/>
</dbReference>
<dbReference type="Pfam" id="PF02657">
    <property type="entry name" value="SufE"/>
    <property type="match status" value="1"/>
</dbReference>
<dbReference type="SUPFAM" id="SSF82649">
    <property type="entry name" value="SufE/NifU"/>
    <property type="match status" value="1"/>
</dbReference>
<name>SUFE_PECAS</name>
<keyword id="KW-0963">Cytoplasm</keyword>
<keyword id="KW-1185">Reference proteome</keyword>
<organism>
    <name type="scientific">Pectobacterium atrosepticum (strain SCRI 1043 / ATCC BAA-672)</name>
    <name type="common">Erwinia carotovora subsp. atroseptica</name>
    <dbReference type="NCBI Taxonomy" id="218491"/>
    <lineage>
        <taxon>Bacteria</taxon>
        <taxon>Pseudomonadati</taxon>
        <taxon>Pseudomonadota</taxon>
        <taxon>Gammaproteobacteria</taxon>
        <taxon>Enterobacterales</taxon>
        <taxon>Pectobacteriaceae</taxon>
        <taxon>Pectobacterium</taxon>
    </lineage>
</organism>
<sequence>MASLPEPQKLARNFARCNDWEEKYLYVIELGERLDPLPDEWRNPENLISGCQSQVWIVTQPDEQGVLILHGDSDAAIVKGLIAVVFSLYQGLTAQEIVELDVRPFFESLALNQHLTPSRSQGLEAMLRAIRAHAAALL</sequence>
<feature type="chain" id="PRO_0000202128" description="Cysteine desulfuration protein SufE">
    <location>
        <begin position="1"/>
        <end position="138"/>
    </location>
</feature>
<feature type="active site" description="Cysteine persulfide intermediate" evidence="1">
    <location>
        <position position="51"/>
    </location>
</feature>
<reference key="1">
    <citation type="journal article" date="2004" name="Proc. Natl. Acad. Sci. U.S.A.">
        <title>Genome sequence of the enterobacterial phytopathogen Erwinia carotovora subsp. atroseptica and characterization of virulence factors.</title>
        <authorList>
            <person name="Bell K.S."/>
            <person name="Sebaihia M."/>
            <person name="Pritchard L."/>
            <person name="Holden M.T.G."/>
            <person name="Hyman L.J."/>
            <person name="Holeva M.C."/>
            <person name="Thomson N.R."/>
            <person name="Bentley S.D."/>
            <person name="Churcher L.J.C."/>
            <person name="Mungall K."/>
            <person name="Atkin R."/>
            <person name="Bason N."/>
            <person name="Brooks K."/>
            <person name="Chillingworth T."/>
            <person name="Clark K."/>
            <person name="Doggett J."/>
            <person name="Fraser A."/>
            <person name="Hance Z."/>
            <person name="Hauser H."/>
            <person name="Jagels K."/>
            <person name="Moule S."/>
            <person name="Norbertczak H."/>
            <person name="Ormond D."/>
            <person name="Price C."/>
            <person name="Quail M.A."/>
            <person name="Sanders M."/>
            <person name="Walker D."/>
            <person name="Whitehead S."/>
            <person name="Salmond G.P.C."/>
            <person name="Birch P.R.J."/>
            <person name="Parkhill J."/>
            <person name="Toth I.K."/>
        </authorList>
    </citation>
    <scope>NUCLEOTIDE SEQUENCE [LARGE SCALE GENOMIC DNA]</scope>
    <source>
        <strain>SCRI 1043 / ATCC BAA-672</strain>
    </source>
</reference>
<gene>
    <name evidence="1" type="primary">sufE</name>
    <name type="ordered locus">ECA1864</name>
</gene>